<comment type="function">
    <text evidence="1">Plays a critical role in the incorporation of lipoproteins in the outer membrane after they are released by the LolA protein.</text>
</comment>
<comment type="subunit">
    <text evidence="1">Monomer.</text>
</comment>
<comment type="subcellular location">
    <subcellularLocation>
        <location evidence="1">Cell outer membrane</location>
        <topology evidence="1">Lipid-anchor</topology>
    </subcellularLocation>
</comment>
<comment type="similarity">
    <text evidence="1">Belongs to the LolB family.</text>
</comment>
<accession>B7LGX0</accession>
<dbReference type="EMBL" id="CU928145">
    <property type="protein sequence ID" value="CAU97163.1"/>
    <property type="molecule type" value="Genomic_DNA"/>
</dbReference>
<dbReference type="RefSeq" id="WP_001130692.1">
    <property type="nucleotide sequence ID" value="NC_011748.1"/>
</dbReference>
<dbReference type="SMR" id="B7LGX0"/>
<dbReference type="GeneID" id="93775274"/>
<dbReference type="KEGG" id="eck:EC55989_1305"/>
<dbReference type="HOGENOM" id="CLU_092816_1_1_6"/>
<dbReference type="Proteomes" id="UP000000746">
    <property type="component" value="Chromosome"/>
</dbReference>
<dbReference type="GO" id="GO:0009279">
    <property type="term" value="C:cell outer membrane"/>
    <property type="evidence" value="ECO:0007669"/>
    <property type="project" value="UniProtKB-SubCell"/>
</dbReference>
<dbReference type="GO" id="GO:0044874">
    <property type="term" value="P:lipoprotein localization to outer membrane"/>
    <property type="evidence" value="ECO:0007669"/>
    <property type="project" value="UniProtKB-UniRule"/>
</dbReference>
<dbReference type="GO" id="GO:0015031">
    <property type="term" value="P:protein transport"/>
    <property type="evidence" value="ECO:0007669"/>
    <property type="project" value="UniProtKB-KW"/>
</dbReference>
<dbReference type="CDD" id="cd16326">
    <property type="entry name" value="LolB"/>
    <property type="match status" value="1"/>
</dbReference>
<dbReference type="FunFam" id="2.50.20.10:FF:000002">
    <property type="entry name" value="Outer-membrane lipoprotein LolB"/>
    <property type="match status" value="1"/>
</dbReference>
<dbReference type="Gene3D" id="2.50.20.10">
    <property type="entry name" value="Lipoprotein localisation LolA/LolB/LppX"/>
    <property type="match status" value="1"/>
</dbReference>
<dbReference type="HAMAP" id="MF_00233">
    <property type="entry name" value="LolB"/>
    <property type="match status" value="1"/>
</dbReference>
<dbReference type="InterPro" id="IPR029046">
    <property type="entry name" value="LolA/LolB/LppX"/>
</dbReference>
<dbReference type="InterPro" id="IPR004565">
    <property type="entry name" value="OM_lipoprot_LolB"/>
</dbReference>
<dbReference type="NCBIfam" id="TIGR00548">
    <property type="entry name" value="lolB"/>
    <property type="match status" value="1"/>
</dbReference>
<dbReference type="Pfam" id="PF03550">
    <property type="entry name" value="LolB"/>
    <property type="match status" value="1"/>
</dbReference>
<dbReference type="SUPFAM" id="SSF89392">
    <property type="entry name" value="Prokaryotic lipoproteins and lipoprotein localization factors"/>
    <property type="match status" value="1"/>
</dbReference>
<dbReference type="PROSITE" id="PS51257">
    <property type="entry name" value="PROKAR_LIPOPROTEIN"/>
    <property type="match status" value="1"/>
</dbReference>
<evidence type="ECO:0000255" key="1">
    <source>
        <dbReference type="HAMAP-Rule" id="MF_00233"/>
    </source>
</evidence>
<name>LOLB_ECO55</name>
<organism>
    <name type="scientific">Escherichia coli (strain 55989 / EAEC)</name>
    <dbReference type="NCBI Taxonomy" id="585055"/>
    <lineage>
        <taxon>Bacteria</taxon>
        <taxon>Pseudomonadati</taxon>
        <taxon>Pseudomonadota</taxon>
        <taxon>Gammaproteobacteria</taxon>
        <taxon>Enterobacterales</taxon>
        <taxon>Enterobacteriaceae</taxon>
        <taxon>Escherichia</taxon>
    </lineage>
</organism>
<protein>
    <recommendedName>
        <fullName evidence="1">Outer-membrane lipoprotein LolB</fullName>
    </recommendedName>
</protein>
<keyword id="KW-0998">Cell outer membrane</keyword>
<keyword id="KW-0143">Chaperone</keyword>
<keyword id="KW-0449">Lipoprotein</keyword>
<keyword id="KW-0472">Membrane</keyword>
<keyword id="KW-0564">Palmitate</keyword>
<keyword id="KW-0653">Protein transport</keyword>
<keyword id="KW-1185">Reference proteome</keyword>
<keyword id="KW-0732">Signal</keyword>
<keyword id="KW-0813">Transport</keyword>
<sequence>MPLPDFRLIRLLPLAALVLTACSVTTPKGPGKSPDSPQWRQHQQDVRNLNQYQTRGAFAYISDQQKVYARFFWQQTGQDRYRLLLTNPLGSTELELNAQPGNVQLVDNKGQRYTADDAEEMIGKLTGMPIPLNSLRQWILGLPGDATDYKLDDQYRLSEITYSQNGKNWKVVYGGYDTKTQPAMPANMELTDGGQRIKLKMDNWIVK</sequence>
<feature type="signal peptide" evidence="1">
    <location>
        <begin position="1"/>
        <end position="21"/>
    </location>
</feature>
<feature type="chain" id="PRO_1000190853" description="Outer-membrane lipoprotein LolB">
    <location>
        <begin position="22"/>
        <end position="207"/>
    </location>
</feature>
<feature type="lipid moiety-binding region" description="N-palmitoyl cysteine" evidence="1">
    <location>
        <position position="22"/>
    </location>
</feature>
<feature type="lipid moiety-binding region" description="S-diacylglycerol cysteine" evidence="1">
    <location>
        <position position="22"/>
    </location>
</feature>
<reference key="1">
    <citation type="journal article" date="2009" name="PLoS Genet.">
        <title>Organised genome dynamics in the Escherichia coli species results in highly diverse adaptive paths.</title>
        <authorList>
            <person name="Touchon M."/>
            <person name="Hoede C."/>
            <person name="Tenaillon O."/>
            <person name="Barbe V."/>
            <person name="Baeriswyl S."/>
            <person name="Bidet P."/>
            <person name="Bingen E."/>
            <person name="Bonacorsi S."/>
            <person name="Bouchier C."/>
            <person name="Bouvet O."/>
            <person name="Calteau A."/>
            <person name="Chiapello H."/>
            <person name="Clermont O."/>
            <person name="Cruveiller S."/>
            <person name="Danchin A."/>
            <person name="Diard M."/>
            <person name="Dossat C."/>
            <person name="Karoui M.E."/>
            <person name="Frapy E."/>
            <person name="Garry L."/>
            <person name="Ghigo J.M."/>
            <person name="Gilles A.M."/>
            <person name="Johnson J."/>
            <person name="Le Bouguenec C."/>
            <person name="Lescat M."/>
            <person name="Mangenot S."/>
            <person name="Martinez-Jehanne V."/>
            <person name="Matic I."/>
            <person name="Nassif X."/>
            <person name="Oztas S."/>
            <person name="Petit M.A."/>
            <person name="Pichon C."/>
            <person name="Rouy Z."/>
            <person name="Ruf C.S."/>
            <person name="Schneider D."/>
            <person name="Tourret J."/>
            <person name="Vacherie B."/>
            <person name="Vallenet D."/>
            <person name="Medigue C."/>
            <person name="Rocha E.P.C."/>
            <person name="Denamur E."/>
        </authorList>
    </citation>
    <scope>NUCLEOTIDE SEQUENCE [LARGE SCALE GENOMIC DNA]</scope>
    <source>
        <strain>55989 / EAEC</strain>
    </source>
</reference>
<gene>
    <name evidence="1" type="primary">lolB</name>
    <name type="ordered locus">EC55989_1305</name>
</gene>
<proteinExistence type="inferred from homology"/>